<dbReference type="EC" id="6.1.1.23" evidence="1"/>
<dbReference type="EMBL" id="CP000903">
    <property type="protein sequence ID" value="ABY45408.1"/>
    <property type="molecule type" value="Genomic_DNA"/>
</dbReference>
<dbReference type="RefSeq" id="WP_002015297.1">
    <property type="nucleotide sequence ID" value="NC_010184.1"/>
</dbReference>
<dbReference type="SMR" id="A9VIM8"/>
<dbReference type="GeneID" id="66266028"/>
<dbReference type="KEGG" id="bwe:BcerKBAB4_4249"/>
<dbReference type="eggNOG" id="COG0173">
    <property type="taxonomic scope" value="Bacteria"/>
</dbReference>
<dbReference type="HOGENOM" id="CLU_014330_3_2_9"/>
<dbReference type="Proteomes" id="UP000002154">
    <property type="component" value="Chromosome"/>
</dbReference>
<dbReference type="GO" id="GO:0005737">
    <property type="term" value="C:cytoplasm"/>
    <property type="evidence" value="ECO:0007669"/>
    <property type="project" value="UniProtKB-SubCell"/>
</dbReference>
<dbReference type="GO" id="GO:0004815">
    <property type="term" value="F:aspartate-tRNA ligase activity"/>
    <property type="evidence" value="ECO:0007669"/>
    <property type="project" value="UniProtKB-UniRule"/>
</dbReference>
<dbReference type="GO" id="GO:0050560">
    <property type="term" value="F:aspartate-tRNA(Asn) ligase activity"/>
    <property type="evidence" value="ECO:0007669"/>
    <property type="project" value="UniProtKB-EC"/>
</dbReference>
<dbReference type="GO" id="GO:0005524">
    <property type="term" value="F:ATP binding"/>
    <property type="evidence" value="ECO:0007669"/>
    <property type="project" value="UniProtKB-UniRule"/>
</dbReference>
<dbReference type="GO" id="GO:0140096">
    <property type="term" value="F:catalytic activity, acting on a protein"/>
    <property type="evidence" value="ECO:0007669"/>
    <property type="project" value="UniProtKB-ARBA"/>
</dbReference>
<dbReference type="GO" id="GO:0003676">
    <property type="term" value="F:nucleic acid binding"/>
    <property type="evidence" value="ECO:0007669"/>
    <property type="project" value="InterPro"/>
</dbReference>
<dbReference type="GO" id="GO:0016740">
    <property type="term" value="F:transferase activity"/>
    <property type="evidence" value="ECO:0007669"/>
    <property type="project" value="UniProtKB-ARBA"/>
</dbReference>
<dbReference type="GO" id="GO:0006422">
    <property type="term" value="P:aspartyl-tRNA aminoacylation"/>
    <property type="evidence" value="ECO:0007669"/>
    <property type="project" value="UniProtKB-UniRule"/>
</dbReference>
<dbReference type="CDD" id="cd00777">
    <property type="entry name" value="AspRS_core"/>
    <property type="match status" value="1"/>
</dbReference>
<dbReference type="CDD" id="cd04317">
    <property type="entry name" value="EcAspRS_like_N"/>
    <property type="match status" value="1"/>
</dbReference>
<dbReference type="Gene3D" id="3.30.930.10">
    <property type="entry name" value="Bira Bifunctional Protein, Domain 2"/>
    <property type="match status" value="1"/>
</dbReference>
<dbReference type="Gene3D" id="3.30.1360.30">
    <property type="entry name" value="GAD-like domain"/>
    <property type="match status" value="1"/>
</dbReference>
<dbReference type="Gene3D" id="2.40.50.140">
    <property type="entry name" value="Nucleic acid-binding proteins"/>
    <property type="match status" value="1"/>
</dbReference>
<dbReference type="HAMAP" id="MF_00044">
    <property type="entry name" value="Asp_tRNA_synth_type1"/>
    <property type="match status" value="1"/>
</dbReference>
<dbReference type="InterPro" id="IPR004364">
    <property type="entry name" value="Aa-tRNA-synt_II"/>
</dbReference>
<dbReference type="InterPro" id="IPR006195">
    <property type="entry name" value="aa-tRNA-synth_II"/>
</dbReference>
<dbReference type="InterPro" id="IPR045864">
    <property type="entry name" value="aa-tRNA-synth_II/BPL/LPL"/>
</dbReference>
<dbReference type="InterPro" id="IPR004524">
    <property type="entry name" value="Asp-tRNA-ligase_1"/>
</dbReference>
<dbReference type="InterPro" id="IPR047089">
    <property type="entry name" value="Asp-tRNA-ligase_1_N"/>
</dbReference>
<dbReference type="InterPro" id="IPR002312">
    <property type="entry name" value="Asp/Asn-tRNA-synth_IIb"/>
</dbReference>
<dbReference type="InterPro" id="IPR047090">
    <property type="entry name" value="AspRS_core"/>
</dbReference>
<dbReference type="InterPro" id="IPR004115">
    <property type="entry name" value="GAD-like_sf"/>
</dbReference>
<dbReference type="InterPro" id="IPR029351">
    <property type="entry name" value="GAD_dom"/>
</dbReference>
<dbReference type="InterPro" id="IPR012340">
    <property type="entry name" value="NA-bd_OB-fold"/>
</dbReference>
<dbReference type="InterPro" id="IPR004365">
    <property type="entry name" value="NA-bd_OB_tRNA"/>
</dbReference>
<dbReference type="NCBIfam" id="TIGR00459">
    <property type="entry name" value="aspS_bact"/>
    <property type="match status" value="1"/>
</dbReference>
<dbReference type="NCBIfam" id="NF001750">
    <property type="entry name" value="PRK00476.1"/>
    <property type="match status" value="1"/>
</dbReference>
<dbReference type="PANTHER" id="PTHR22594:SF5">
    <property type="entry name" value="ASPARTATE--TRNA LIGASE, MITOCHONDRIAL"/>
    <property type="match status" value="1"/>
</dbReference>
<dbReference type="PANTHER" id="PTHR22594">
    <property type="entry name" value="ASPARTYL/LYSYL-TRNA SYNTHETASE"/>
    <property type="match status" value="1"/>
</dbReference>
<dbReference type="Pfam" id="PF02938">
    <property type="entry name" value="GAD"/>
    <property type="match status" value="1"/>
</dbReference>
<dbReference type="Pfam" id="PF00152">
    <property type="entry name" value="tRNA-synt_2"/>
    <property type="match status" value="1"/>
</dbReference>
<dbReference type="Pfam" id="PF01336">
    <property type="entry name" value="tRNA_anti-codon"/>
    <property type="match status" value="1"/>
</dbReference>
<dbReference type="PRINTS" id="PR01042">
    <property type="entry name" value="TRNASYNTHASP"/>
</dbReference>
<dbReference type="SUPFAM" id="SSF55681">
    <property type="entry name" value="Class II aaRS and biotin synthetases"/>
    <property type="match status" value="1"/>
</dbReference>
<dbReference type="SUPFAM" id="SSF55261">
    <property type="entry name" value="GAD domain-like"/>
    <property type="match status" value="1"/>
</dbReference>
<dbReference type="SUPFAM" id="SSF50249">
    <property type="entry name" value="Nucleic acid-binding proteins"/>
    <property type="match status" value="1"/>
</dbReference>
<dbReference type="PROSITE" id="PS50862">
    <property type="entry name" value="AA_TRNA_LIGASE_II"/>
    <property type="match status" value="1"/>
</dbReference>
<comment type="function">
    <text evidence="1">Aspartyl-tRNA synthetase with relaxed tRNA specificity since it is able to aspartylate not only its cognate tRNA(Asp) but also tRNA(Asn). Reaction proceeds in two steps: L-aspartate is first activated by ATP to form Asp-AMP and then transferred to the acceptor end of tRNA(Asp/Asn).</text>
</comment>
<comment type="catalytic activity">
    <reaction evidence="1">
        <text>tRNA(Asx) + L-aspartate + ATP = L-aspartyl-tRNA(Asx) + AMP + diphosphate</text>
        <dbReference type="Rhea" id="RHEA:18349"/>
        <dbReference type="Rhea" id="RHEA-COMP:9710"/>
        <dbReference type="Rhea" id="RHEA-COMP:9711"/>
        <dbReference type="ChEBI" id="CHEBI:29991"/>
        <dbReference type="ChEBI" id="CHEBI:30616"/>
        <dbReference type="ChEBI" id="CHEBI:33019"/>
        <dbReference type="ChEBI" id="CHEBI:78442"/>
        <dbReference type="ChEBI" id="CHEBI:78516"/>
        <dbReference type="ChEBI" id="CHEBI:456215"/>
        <dbReference type="EC" id="6.1.1.23"/>
    </reaction>
</comment>
<comment type="subunit">
    <text evidence="1">Homodimer.</text>
</comment>
<comment type="subcellular location">
    <subcellularLocation>
        <location evidence="1">Cytoplasm</location>
    </subcellularLocation>
</comment>
<comment type="similarity">
    <text evidence="1">Belongs to the class-II aminoacyl-tRNA synthetase family. Type 1 subfamily.</text>
</comment>
<keyword id="KW-0030">Aminoacyl-tRNA synthetase</keyword>
<keyword id="KW-0067">ATP-binding</keyword>
<keyword id="KW-0963">Cytoplasm</keyword>
<keyword id="KW-0436">Ligase</keyword>
<keyword id="KW-0547">Nucleotide-binding</keyword>
<keyword id="KW-0648">Protein biosynthesis</keyword>
<sequence>MAERTHACGKVTVEAVGQTVQLKGWVQKRRDLGGLIFIDLRDRTGIVQVVFNPETSKEALEVAETIRSEYVLHVEGTVVERGEGAINDNMATGRIEVQASKVNVLNAAKTTPIIIADDTDASEDVRLKYRYLDLRRPAMFNTFKMRHDVTKTIRNFLDTEEFLEVETPILTKSTPEGARDYLVPSRVHDGEFYALPQSPQLFKQLLMVGGFERYYQVARCFRDEDLRADRQPEFTQIDIEASFLTQDEILEMMERMMTKVMKDAKGVEVSAPFPRMKYADAMARFGSDKPDTRFEMELKDLSEFAVGCGFKVFTSAVENGGQVKAINAKGAASKYSRKDIDALTEFAKVYGAKGLAWLKVEEDGLKGPIAKFFGEEEANVLMSTLEADAGDLLLFVADKKSVVADSLGALRLRLGKELELIDESKFNFLWVTDWPLLEYDEDADRYFAAHHPFTMPFREDVELLETAPEKARAQAYDLVLNGYELGGGSLRIYERDVQEKMFKALGFSQEEAQEQFGFLLEAFEYGTPPHGGIALGLDRLVMLLAGRTNLRDTIAFPKTASASCLLTEAPSPVAEAQLEELSLKLSLKEEK</sequence>
<gene>
    <name evidence="1" type="primary">aspS</name>
    <name type="ordered locus">BcerKBAB4_4249</name>
</gene>
<accession>A9VIM8</accession>
<reference key="1">
    <citation type="journal article" date="2008" name="Chem. Biol. Interact.">
        <title>Extending the Bacillus cereus group genomics to putative food-borne pathogens of different toxicity.</title>
        <authorList>
            <person name="Lapidus A."/>
            <person name="Goltsman E."/>
            <person name="Auger S."/>
            <person name="Galleron N."/>
            <person name="Segurens B."/>
            <person name="Dossat C."/>
            <person name="Land M.L."/>
            <person name="Broussolle V."/>
            <person name="Brillard J."/>
            <person name="Guinebretiere M.-H."/>
            <person name="Sanchis V."/>
            <person name="Nguen-the C."/>
            <person name="Lereclus D."/>
            <person name="Richardson P."/>
            <person name="Wincker P."/>
            <person name="Weissenbach J."/>
            <person name="Ehrlich S.D."/>
            <person name="Sorokin A."/>
        </authorList>
    </citation>
    <scope>NUCLEOTIDE SEQUENCE [LARGE SCALE GENOMIC DNA]</scope>
    <source>
        <strain>KBAB4</strain>
    </source>
</reference>
<evidence type="ECO:0000255" key="1">
    <source>
        <dbReference type="HAMAP-Rule" id="MF_00044"/>
    </source>
</evidence>
<feature type="chain" id="PRO_1000090959" description="Aspartate--tRNA(Asp/Asn) ligase">
    <location>
        <begin position="1"/>
        <end position="591"/>
    </location>
</feature>
<feature type="region of interest" description="Aspartate" evidence="1">
    <location>
        <begin position="200"/>
        <end position="203"/>
    </location>
</feature>
<feature type="binding site" evidence="1">
    <location>
        <position position="176"/>
    </location>
    <ligand>
        <name>L-aspartate</name>
        <dbReference type="ChEBI" id="CHEBI:29991"/>
    </ligand>
</feature>
<feature type="binding site" evidence="1">
    <location>
        <begin position="222"/>
        <end position="224"/>
    </location>
    <ligand>
        <name>ATP</name>
        <dbReference type="ChEBI" id="CHEBI:30616"/>
    </ligand>
</feature>
<feature type="binding site" evidence="1">
    <location>
        <position position="222"/>
    </location>
    <ligand>
        <name>L-aspartate</name>
        <dbReference type="ChEBI" id="CHEBI:29991"/>
    </ligand>
</feature>
<feature type="binding site" evidence="1">
    <location>
        <position position="231"/>
    </location>
    <ligand>
        <name>ATP</name>
        <dbReference type="ChEBI" id="CHEBI:30616"/>
    </ligand>
</feature>
<feature type="binding site" evidence="1">
    <location>
        <position position="450"/>
    </location>
    <ligand>
        <name>L-aspartate</name>
        <dbReference type="ChEBI" id="CHEBI:29991"/>
    </ligand>
</feature>
<feature type="binding site" evidence="1">
    <location>
        <position position="484"/>
    </location>
    <ligand>
        <name>ATP</name>
        <dbReference type="ChEBI" id="CHEBI:30616"/>
    </ligand>
</feature>
<feature type="binding site" evidence="1">
    <location>
        <position position="491"/>
    </location>
    <ligand>
        <name>L-aspartate</name>
        <dbReference type="ChEBI" id="CHEBI:29991"/>
    </ligand>
</feature>
<feature type="binding site" evidence="1">
    <location>
        <begin position="536"/>
        <end position="539"/>
    </location>
    <ligand>
        <name>ATP</name>
        <dbReference type="ChEBI" id="CHEBI:30616"/>
    </ligand>
</feature>
<feature type="site" description="Important for tRNA non-discrimination" evidence="1">
    <location>
        <position position="84"/>
    </location>
</feature>
<proteinExistence type="inferred from homology"/>
<name>SYDND_BACMK</name>
<organism>
    <name type="scientific">Bacillus mycoides (strain KBAB4)</name>
    <name type="common">Bacillus weihenstephanensis</name>
    <dbReference type="NCBI Taxonomy" id="315730"/>
    <lineage>
        <taxon>Bacteria</taxon>
        <taxon>Bacillati</taxon>
        <taxon>Bacillota</taxon>
        <taxon>Bacilli</taxon>
        <taxon>Bacillales</taxon>
        <taxon>Bacillaceae</taxon>
        <taxon>Bacillus</taxon>
        <taxon>Bacillus cereus group</taxon>
    </lineage>
</organism>
<protein>
    <recommendedName>
        <fullName evidence="1">Aspartate--tRNA(Asp/Asn) ligase</fullName>
        <ecNumber evidence="1">6.1.1.23</ecNumber>
    </recommendedName>
    <alternativeName>
        <fullName evidence="1">Aspartyl-tRNA synthetase</fullName>
        <shortName evidence="1">AspRS</shortName>
    </alternativeName>
    <alternativeName>
        <fullName evidence="1">Non-discriminating aspartyl-tRNA synthetase</fullName>
        <shortName evidence="1">ND-AspRS</shortName>
    </alternativeName>
</protein>